<reference key="1">
    <citation type="submission" date="2007-05" db="EMBL/GenBank/DDBJ databases">
        <title>Complete sequence of Thermotoga petrophila RKU-1.</title>
        <authorList>
            <consortium name="US DOE Joint Genome Institute"/>
            <person name="Copeland A."/>
            <person name="Lucas S."/>
            <person name="Lapidus A."/>
            <person name="Barry K."/>
            <person name="Glavina del Rio T."/>
            <person name="Dalin E."/>
            <person name="Tice H."/>
            <person name="Pitluck S."/>
            <person name="Sims D."/>
            <person name="Brettin T."/>
            <person name="Bruce D."/>
            <person name="Detter J.C."/>
            <person name="Han C."/>
            <person name="Tapia R."/>
            <person name="Schmutz J."/>
            <person name="Larimer F."/>
            <person name="Land M."/>
            <person name="Hauser L."/>
            <person name="Kyrpides N."/>
            <person name="Mikhailova N."/>
            <person name="Nelson K."/>
            <person name="Gogarten J.P."/>
            <person name="Noll K."/>
            <person name="Richardson P."/>
        </authorList>
    </citation>
    <scope>NUCLEOTIDE SEQUENCE [LARGE SCALE GENOMIC DNA]</scope>
    <source>
        <strain>ATCC BAA-488 / DSM 13995 / JCM 10881 / RKU-1</strain>
    </source>
</reference>
<sequence length="118" mass="13892">MRVKRAVHAKKKRKKYLKAAKGYRGALSRRYKLAKQMYVRSKWYSYVGRKLKKRDMRKLWITRINIAARNEGLKYSEFIHGLKLAGVSINRKMLSELAVNDPEAFREYVKIAKEALAS</sequence>
<accession>A5ILZ2</accession>
<evidence type="ECO:0000255" key="1">
    <source>
        <dbReference type="HAMAP-Rule" id="MF_00382"/>
    </source>
</evidence>
<evidence type="ECO:0000305" key="2"/>
<feature type="chain" id="PRO_1000049097" description="Large ribosomal subunit protein bL20">
    <location>
        <begin position="1"/>
        <end position="118"/>
    </location>
</feature>
<name>RL20_THEP1</name>
<comment type="function">
    <text evidence="1">Binds directly to 23S ribosomal RNA and is necessary for the in vitro assembly process of the 50S ribosomal subunit. It is not involved in the protein synthesizing functions of that subunit.</text>
</comment>
<comment type="similarity">
    <text evidence="1">Belongs to the bacterial ribosomal protein bL20 family.</text>
</comment>
<keyword id="KW-0687">Ribonucleoprotein</keyword>
<keyword id="KW-0689">Ribosomal protein</keyword>
<keyword id="KW-0694">RNA-binding</keyword>
<keyword id="KW-0699">rRNA-binding</keyword>
<proteinExistence type="inferred from homology"/>
<protein>
    <recommendedName>
        <fullName evidence="1">Large ribosomal subunit protein bL20</fullName>
    </recommendedName>
    <alternativeName>
        <fullName evidence="2">50S ribosomal protein L20</fullName>
    </alternativeName>
</protein>
<dbReference type="EMBL" id="CP000702">
    <property type="protein sequence ID" value="ABQ47215.1"/>
    <property type="molecule type" value="Genomic_DNA"/>
</dbReference>
<dbReference type="RefSeq" id="WP_011943719.1">
    <property type="nucleotide sequence ID" value="NC_009486.1"/>
</dbReference>
<dbReference type="SMR" id="A5ILZ2"/>
<dbReference type="STRING" id="390874.Tpet_1201"/>
<dbReference type="KEGG" id="tpt:Tpet_1201"/>
<dbReference type="eggNOG" id="COG0292">
    <property type="taxonomic scope" value="Bacteria"/>
</dbReference>
<dbReference type="HOGENOM" id="CLU_123265_0_1_0"/>
<dbReference type="Proteomes" id="UP000006558">
    <property type="component" value="Chromosome"/>
</dbReference>
<dbReference type="GO" id="GO:1990904">
    <property type="term" value="C:ribonucleoprotein complex"/>
    <property type="evidence" value="ECO:0007669"/>
    <property type="project" value="UniProtKB-KW"/>
</dbReference>
<dbReference type="GO" id="GO:0005840">
    <property type="term" value="C:ribosome"/>
    <property type="evidence" value="ECO:0007669"/>
    <property type="project" value="UniProtKB-KW"/>
</dbReference>
<dbReference type="GO" id="GO:0019843">
    <property type="term" value="F:rRNA binding"/>
    <property type="evidence" value="ECO:0007669"/>
    <property type="project" value="UniProtKB-UniRule"/>
</dbReference>
<dbReference type="GO" id="GO:0003735">
    <property type="term" value="F:structural constituent of ribosome"/>
    <property type="evidence" value="ECO:0007669"/>
    <property type="project" value="InterPro"/>
</dbReference>
<dbReference type="GO" id="GO:0000027">
    <property type="term" value="P:ribosomal large subunit assembly"/>
    <property type="evidence" value="ECO:0007669"/>
    <property type="project" value="UniProtKB-UniRule"/>
</dbReference>
<dbReference type="GO" id="GO:0006412">
    <property type="term" value="P:translation"/>
    <property type="evidence" value="ECO:0007669"/>
    <property type="project" value="InterPro"/>
</dbReference>
<dbReference type="CDD" id="cd07026">
    <property type="entry name" value="Ribosomal_L20"/>
    <property type="match status" value="1"/>
</dbReference>
<dbReference type="FunFam" id="1.10.1900.20:FF:000001">
    <property type="entry name" value="50S ribosomal protein L20"/>
    <property type="match status" value="1"/>
</dbReference>
<dbReference type="Gene3D" id="6.10.160.10">
    <property type="match status" value="1"/>
</dbReference>
<dbReference type="Gene3D" id="1.10.1900.20">
    <property type="entry name" value="Ribosomal protein L20"/>
    <property type="match status" value="1"/>
</dbReference>
<dbReference type="HAMAP" id="MF_00382">
    <property type="entry name" value="Ribosomal_bL20"/>
    <property type="match status" value="1"/>
</dbReference>
<dbReference type="InterPro" id="IPR005813">
    <property type="entry name" value="Ribosomal_bL20"/>
</dbReference>
<dbReference type="InterPro" id="IPR049946">
    <property type="entry name" value="RIBOSOMAL_L20_CS"/>
</dbReference>
<dbReference type="InterPro" id="IPR035566">
    <property type="entry name" value="Ribosomal_protein_bL20_C"/>
</dbReference>
<dbReference type="NCBIfam" id="TIGR01032">
    <property type="entry name" value="rplT_bact"/>
    <property type="match status" value="1"/>
</dbReference>
<dbReference type="PANTHER" id="PTHR10986">
    <property type="entry name" value="39S RIBOSOMAL PROTEIN L20"/>
    <property type="match status" value="1"/>
</dbReference>
<dbReference type="Pfam" id="PF00453">
    <property type="entry name" value="Ribosomal_L20"/>
    <property type="match status" value="1"/>
</dbReference>
<dbReference type="PRINTS" id="PR00062">
    <property type="entry name" value="RIBOSOMALL20"/>
</dbReference>
<dbReference type="SUPFAM" id="SSF74731">
    <property type="entry name" value="Ribosomal protein L20"/>
    <property type="match status" value="1"/>
</dbReference>
<dbReference type="PROSITE" id="PS00937">
    <property type="entry name" value="RIBOSOMAL_L20"/>
    <property type="match status" value="1"/>
</dbReference>
<gene>
    <name evidence="1" type="primary">rplT</name>
    <name type="ordered locus">Tpet_1201</name>
</gene>
<organism>
    <name type="scientific">Thermotoga petrophila (strain ATCC BAA-488 / DSM 13995 / JCM 10881 / RKU-1)</name>
    <dbReference type="NCBI Taxonomy" id="390874"/>
    <lineage>
        <taxon>Bacteria</taxon>
        <taxon>Thermotogati</taxon>
        <taxon>Thermotogota</taxon>
        <taxon>Thermotogae</taxon>
        <taxon>Thermotogales</taxon>
        <taxon>Thermotogaceae</taxon>
        <taxon>Thermotoga</taxon>
    </lineage>
</organism>